<sequence length="521" mass="58859">MASLFHLRFLKPLSCLQAGLLYSLIFGVLYHFPLFVYVYKESNQVSFIAMMVVVLFCVNGALFLALGLISASLMRWSAIVFSLLNSVAFYFISAYKVFLNKSMMGNVLNTNTHEVLGFLSVKLFVFIVVFGVLPGYVIYKIPLKNSSKKAPFLAILALVFIFIASALANTKNWLWFDKHAKFIGGLILPFAYSVNAFRVSALKFFAPTIKPLPLFSPNHSHSFVVLVIGESARKHNYALYGYQKPTTPRLSKRLADNELTLFNATSCATYTTASLECILDSSFKNNAYENLPTYLTKAGIKVFWYSANDGEKNVKVTSYLKNYELIQKCPNCEAIAPYDESLLYNLPDLLKEHSNENVLLILHLAGSHGPNYDNKVPLNFRVFKPYCSSADLSSCSKESLINAYDNTIFYNDYLLDKIISMLENAKQPALMIYLSDHGESLGEEAFYLHGIPKSIAPKEQYEIPFIVYANEPFKEKHSIIQTQTPINQNVIFHSVLGVFLDFKNPSVVYRPSLDLLKHKKE</sequence>
<organism>
    <name type="scientific">Helicobacter pylori (strain ATCC 700392 / 26695)</name>
    <name type="common">Campylobacter pylori</name>
    <dbReference type="NCBI Taxonomy" id="85962"/>
    <lineage>
        <taxon>Bacteria</taxon>
        <taxon>Pseudomonadati</taxon>
        <taxon>Campylobacterota</taxon>
        <taxon>Epsilonproteobacteria</taxon>
        <taxon>Campylobacterales</taxon>
        <taxon>Helicobacteraceae</taxon>
        <taxon>Helicobacter</taxon>
    </lineage>
</organism>
<keyword id="KW-0997">Cell inner membrane</keyword>
<keyword id="KW-1003">Cell membrane</keyword>
<keyword id="KW-0441">Lipid A biosynthesis</keyword>
<keyword id="KW-0444">Lipid biosynthesis</keyword>
<keyword id="KW-0443">Lipid metabolism</keyword>
<keyword id="KW-0448">Lipopolysaccharide biosynthesis</keyword>
<keyword id="KW-0472">Membrane</keyword>
<keyword id="KW-1185">Reference proteome</keyword>
<keyword id="KW-0808">Transferase</keyword>
<keyword id="KW-0812">Transmembrane</keyword>
<keyword id="KW-1133">Transmembrane helix</keyword>
<protein>
    <recommendedName>
        <fullName evidence="5">Phosphoethanolamine transferase EptA</fullName>
        <ecNumber evidence="5">2.7.-.-</ecNumber>
    </recommendedName>
    <alternativeName>
        <fullName evidence="4">Lipid A 1-phosphoethanolamine transferase</fullName>
    </alternativeName>
</protein>
<comment type="function">
    <text evidence="3">Probably catalyzes the addition of a phosphoethanolamine moiety to the dephosphorylated 1-position of the disaccharide backbone of lipid A. Lipid A that is 1-phosphorylated is not a substrate for this enzyme.</text>
</comment>
<comment type="pathway">
    <text evidence="6">Bacterial outer membrane biogenesis; LPS lipid A biosynthesis.</text>
</comment>
<comment type="subcellular location">
    <subcellularLocation>
        <location evidence="1">Cell inner membrane</location>
        <topology evidence="1">Multi-pass membrane protein</topology>
    </subcellularLocation>
</comment>
<comment type="miscellaneous">
    <text evidence="3">In this organism most lipid A is tetraacylated without a phosphate group at the 4'-position and has a phosphoethanolamine residue at the 1-position.</text>
</comment>
<comment type="similarity">
    <text evidence="5">Belongs to the phosphoethanolamine transferase family. EptA subfamily.</text>
</comment>
<gene>
    <name evidence="4" type="primary">eptA</name>
    <name type="ordered locus">HP_0022</name>
    <name type="ordered locus">C694_00105</name>
</gene>
<name>EPTA_HELPY</name>
<feature type="chain" id="PRO_0000432500" description="Phosphoethanolamine transferase EptA">
    <location>
        <begin position="1"/>
        <end position="521"/>
    </location>
</feature>
<feature type="transmembrane region" description="Helical; Name=1" evidence="2">
    <location>
        <begin position="18"/>
        <end position="38"/>
    </location>
</feature>
<feature type="transmembrane region" description="Helical; Name=2" evidence="2">
    <location>
        <begin position="47"/>
        <end position="67"/>
    </location>
</feature>
<feature type="transmembrane region" description="Helical; Name=3" evidence="2">
    <location>
        <begin position="79"/>
        <end position="99"/>
    </location>
</feature>
<feature type="transmembrane region" description="Helical; Name=4" evidence="2">
    <location>
        <begin position="118"/>
        <end position="138"/>
    </location>
</feature>
<feature type="transmembrane region" description="Helical; Name=5" evidence="2">
    <location>
        <begin position="150"/>
        <end position="170"/>
    </location>
</feature>
<feature type="transmembrane region" description="Helical; Name=6" evidence="2">
    <location>
        <begin position="182"/>
        <end position="202"/>
    </location>
</feature>
<reference key="1">
    <citation type="journal article" date="2004" name="J. Biol. Chem.">
        <title>Periplasmic cleavage and modification of the 1-phosphate group of Helicobacter pylori lipid A.</title>
        <authorList>
            <person name="Tran A.X."/>
            <person name="Karbarz M.J."/>
            <person name="Wang X."/>
            <person name="Raetz C.R."/>
            <person name="McGrath S.C."/>
            <person name="Cotter R.J."/>
            <person name="Trent M.S."/>
        </authorList>
    </citation>
    <scope>NUCLEOTIDE SEQUENCE [GENOMIC DNA]</scope>
    <scope>FUNCTION</scope>
    <scope>PATHWAY</scope>
    <scope>SUBSTRATE SPECIFICITY</scope>
    <scope>SUBCELLULAR LOCATION</scope>
    <scope>STRUCTURE OF LIPID A</scope>
    <source>
        <strain>ATCC 700392 / 26695</strain>
    </source>
</reference>
<reference key="2">
    <citation type="journal article" date="1997" name="Nature">
        <title>The complete genome sequence of the gastric pathogen Helicobacter pylori.</title>
        <authorList>
            <person name="Tomb J.-F."/>
            <person name="White O."/>
            <person name="Kerlavage A.R."/>
            <person name="Clayton R.A."/>
            <person name="Sutton G.G."/>
            <person name="Fleischmann R.D."/>
            <person name="Ketchum K.A."/>
            <person name="Klenk H.-P."/>
            <person name="Gill S.R."/>
            <person name="Dougherty B.A."/>
            <person name="Nelson K.E."/>
            <person name="Quackenbush J."/>
            <person name="Zhou L."/>
            <person name="Kirkness E.F."/>
            <person name="Peterson S.N."/>
            <person name="Loftus B.J."/>
            <person name="Richardson D.L."/>
            <person name="Dodson R.J."/>
            <person name="Khalak H.G."/>
            <person name="Glodek A."/>
            <person name="McKenney K."/>
            <person name="FitzGerald L.M."/>
            <person name="Lee N."/>
            <person name="Adams M.D."/>
            <person name="Hickey E.K."/>
            <person name="Berg D.E."/>
            <person name="Gocayne J.D."/>
            <person name="Utterback T.R."/>
            <person name="Peterson J.D."/>
            <person name="Kelley J.M."/>
            <person name="Cotton M.D."/>
            <person name="Weidman J.F."/>
            <person name="Fujii C."/>
            <person name="Bowman C."/>
            <person name="Watthey L."/>
            <person name="Wallin E."/>
            <person name="Hayes W.S."/>
            <person name="Borodovsky M."/>
            <person name="Karp P.D."/>
            <person name="Smith H.O."/>
            <person name="Fraser C.M."/>
            <person name="Venter J.C."/>
        </authorList>
    </citation>
    <scope>NUCLEOTIDE SEQUENCE [LARGE SCALE GENOMIC DNA]</scope>
    <source>
        <strain>ATCC 700392 / 26695</strain>
    </source>
</reference>
<reference key="3">
    <citation type="submission" date="2012-10" db="EMBL/GenBank/DDBJ databases">
        <title>Draft genome of Helicobacter pylori.</title>
        <authorList>
            <person name="Manolov A."/>
            <person name="Prihodko E."/>
            <person name="Larin A."/>
            <person name="Karpova I."/>
            <person name="Semashko T."/>
            <person name="Alexeev D."/>
            <person name="Kostrjukova E."/>
            <person name="Govorun V."/>
        </authorList>
    </citation>
    <scope>NUCLEOTIDE SEQUENCE [LARGE SCALE GENOMIC DNA]</scope>
    <source>
        <strain>ATCC 700392 / 26695</strain>
    </source>
</reference>
<dbReference type="EC" id="2.7.-.-" evidence="5"/>
<dbReference type="EMBL" id="DQ447325">
    <property type="protein sequence ID" value="ABE02822.1"/>
    <property type="molecule type" value="Genomic_DNA"/>
</dbReference>
<dbReference type="EMBL" id="AE000511">
    <property type="protein sequence ID" value="AAD07089.1"/>
    <property type="molecule type" value="Genomic_DNA"/>
</dbReference>
<dbReference type="EMBL" id="CP003904">
    <property type="protein sequence ID" value="AFV41242.1"/>
    <property type="molecule type" value="Genomic_DNA"/>
</dbReference>
<dbReference type="PIR" id="F64522">
    <property type="entry name" value="F64522"/>
</dbReference>
<dbReference type="RefSeq" id="NP_206824.1">
    <property type="nucleotide sequence ID" value="NC_000915.1"/>
</dbReference>
<dbReference type="RefSeq" id="WP_000157542.1">
    <property type="nucleotide sequence ID" value="NC_018939.1"/>
</dbReference>
<dbReference type="SMR" id="O24867"/>
<dbReference type="FunCoup" id="O24867">
    <property type="interactions" value="60"/>
</dbReference>
<dbReference type="STRING" id="85962.HP_0022"/>
<dbReference type="PaxDb" id="85962-C694_00105"/>
<dbReference type="EnsemblBacteria" id="AAD07089">
    <property type="protein sequence ID" value="AAD07089"/>
    <property type="gene ID" value="HP_0022"/>
</dbReference>
<dbReference type="KEGG" id="heo:C694_00105"/>
<dbReference type="KEGG" id="hpy:HP_0022"/>
<dbReference type="PATRIC" id="fig|85962.47.peg.21"/>
<dbReference type="eggNOG" id="COG2194">
    <property type="taxonomic scope" value="Bacteria"/>
</dbReference>
<dbReference type="HOGENOM" id="CLU_018534_1_1_7"/>
<dbReference type="InParanoid" id="O24867"/>
<dbReference type="OrthoDB" id="9786870at2"/>
<dbReference type="PhylomeDB" id="O24867"/>
<dbReference type="BioCyc" id="MetaCyc:HP_RS00130-MONOMER"/>
<dbReference type="BRENDA" id="2.7.8.43">
    <property type="organism ID" value="2604"/>
</dbReference>
<dbReference type="UniPathway" id="UPA00973"/>
<dbReference type="Proteomes" id="UP000000429">
    <property type="component" value="Chromosome"/>
</dbReference>
<dbReference type="GO" id="GO:0005886">
    <property type="term" value="C:plasma membrane"/>
    <property type="evidence" value="ECO:0000318"/>
    <property type="project" value="GO_Central"/>
</dbReference>
<dbReference type="GO" id="GO:0016780">
    <property type="term" value="F:phosphotransferase activity, for other substituted phosphate groups"/>
    <property type="evidence" value="ECO:0000314"/>
    <property type="project" value="UniProtKB"/>
</dbReference>
<dbReference type="GO" id="GO:0016776">
    <property type="term" value="F:phosphotransferase activity, phosphate group as acceptor"/>
    <property type="evidence" value="ECO:0000318"/>
    <property type="project" value="GO_Central"/>
</dbReference>
<dbReference type="GO" id="GO:0009245">
    <property type="term" value="P:lipid A biosynthetic process"/>
    <property type="evidence" value="ECO:0007669"/>
    <property type="project" value="UniProtKB-UniPathway"/>
</dbReference>
<dbReference type="GO" id="GO:0009244">
    <property type="term" value="P:lipopolysaccharide core region biosynthetic process"/>
    <property type="evidence" value="ECO:0000318"/>
    <property type="project" value="GO_Central"/>
</dbReference>
<dbReference type="CDD" id="cd16017">
    <property type="entry name" value="LptA"/>
    <property type="match status" value="1"/>
</dbReference>
<dbReference type="FunFam" id="3.40.720.10:FF:000118">
    <property type="entry name" value="Lipid A phosphoethanolamine transferase"/>
    <property type="match status" value="1"/>
</dbReference>
<dbReference type="Gene3D" id="3.40.720.10">
    <property type="entry name" value="Alkaline Phosphatase, subunit A"/>
    <property type="match status" value="1"/>
</dbReference>
<dbReference type="InterPro" id="IPR017850">
    <property type="entry name" value="Alkaline_phosphatase_core_sf"/>
</dbReference>
<dbReference type="InterPro" id="IPR012549">
    <property type="entry name" value="EptA-like_N"/>
</dbReference>
<dbReference type="InterPro" id="IPR040423">
    <property type="entry name" value="PEA_transferase"/>
</dbReference>
<dbReference type="InterPro" id="IPR000917">
    <property type="entry name" value="Sulfatase_N"/>
</dbReference>
<dbReference type="NCBIfam" id="NF007160">
    <property type="entry name" value="PRK09598.1"/>
    <property type="match status" value="1"/>
</dbReference>
<dbReference type="PANTHER" id="PTHR30443">
    <property type="entry name" value="INNER MEMBRANE PROTEIN"/>
    <property type="match status" value="1"/>
</dbReference>
<dbReference type="PANTHER" id="PTHR30443:SF0">
    <property type="entry name" value="PHOSPHOETHANOLAMINE TRANSFERASE EPTA"/>
    <property type="match status" value="1"/>
</dbReference>
<dbReference type="Pfam" id="PF08019">
    <property type="entry name" value="EptA_B_N"/>
    <property type="match status" value="1"/>
</dbReference>
<dbReference type="Pfam" id="PF00884">
    <property type="entry name" value="Sulfatase"/>
    <property type="match status" value="1"/>
</dbReference>
<dbReference type="SUPFAM" id="SSF53649">
    <property type="entry name" value="Alkaline phosphatase-like"/>
    <property type="match status" value="1"/>
</dbReference>
<evidence type="ECO:0000250" key="1">
    <source>
        <dbReference type="UniProtKB" id="P36555"/>
    </source>
</evidence>
<evidence type="ECO:0000255" key="2"/>
<evidence type="ECO:0000269" key="3">
    <source>
    </source>
</evidence>
<evidence type="ECO:0000303" key="4">
    <source>
    </source>
</evidence>
<evidence type="ECO:0000305" key="5"/>
<evidence type="ECO:0000305" key="6">
    <source>
    </source>
</evidence>
<proteinExistence type="inferred from homology"/>
<accession>O24867</accession>
<accession>Q1PDD3</accession>